<protein>
    <recommendedName>
        <fullName evidence="1">Methylglyoxal synthase</fullName>
        <shortName evidence="1">MGS</shortName>
        <ecNumber evidence="1">4.2.3.3</ecNumber>
    </recommendedName>
</protein>
<sequence length="120" mass="13329">MRIALIAHDNKKDELLHFIKRYEHVLATHTLCATNSTGRLIAENTNLMVHRYQSGPLGGDQQIGSEIATGNVDFVFFLRDPLTAQPHEPDITALLRICDVHNIPVATNFATAEILVESVL</sequence>
<keyword id="KW-0456">Lyase</keyword>
<keyword id="KW-1185">Reference proteome</keyword>
<accession>B2A7A5</accession>
<name>MGSA_NATTJ</name>
<dbReference type="EC" id="4.2.3.3" evidence="1"/>
<dbReference type="EMBL" id="CP001034">
    <property type="protein sequence ID" value="ACB84299.1"/>
    <property type="molecule type" value="Genomic_DNA"/>
</dbReference>
<dbReference type="RefSeq" id="WP_012447183.1">
    <property type="nucleotide sequence ID" value="NC_010718.1"/>
</dbReference>
<dbReference type="SMR" id="B2A7A5"/>
<dbReference type="FunCoup" id="B2A7A5">
    <property type="interactions" value="46"/>
</dbReference>
<dbReference type="STRING" id="457570.Nther_0707"/>
<dbReference type="KEGG" id="nth:Nther_0707"/>
<dbReference type="eggNOG" id="COG1803">
    <property type="taxonomic scope" value="Bacteria"/>
</dbReference>
<dbReference type="HOGENOM" id="CLU_120420_1_0_9"/>
<dbReference type="InParanoid" id="B2A7A5"/>
<dbReference type="OrthoDB" id="9787147at2"/>
<dbReference type="Proteomes" id="UP000001683">
    <property type="component" value="Chromosome"/>
</dbReference>
<dbReference type="GO" id="GO:0005829">
    <property type="term" value="C:cytosol"/>
    <property type="evidence" value="ECO:0007669"/>
    <property type="project" value="TreeGrafter"/>
</dbReference>
<dbReference type="GO" id="GO:0008929">
    <property type="term" value="F:methylglyoxal synthase activity"/>
    <property type="evidence" value="ECO:0007669"/>
    <property type="project" value="UniProtKB-UniRule"/>
</dbReference>
<dbReference type="GO" id="GO:0019242">
    <property type="term" value="P:methylglyoxal biosynthetic process"/>
    <property type="evidence" value="ECO:0007669"/>
    <property type="project" value="UniProtKB-UniRule"/>
</dbReference>
<dbReference type="CDD" id="cd01422">
    <property type="entry name" value="MGS"/>
    <property type="match status" value="1"/>
</dbReference>
<dbReference type="Gene3D" id="3.40.50.1380">
    <property type="entry name" value="Methylglyoxal synthase-like domain"/>
    <property type="match status" value="1"/>
</dbReference>
<dbReference type="HAMAP" id="MF_00549">
    <property type="entry name" value="Methylglyoxal_synth"/>
    <property type="match status" value="1"/>
</dbReference>
<dbReference type="InterPro" id="IPR004363">
    <property type="entry name" value="Methylgl_synth"/>
</dbReference>
<dbReference type="InterPro" id="IPR018148">
    <property type="entry name" value="Methylglyoxal_synth_AS"/>
</dbReference>
<dbReference type="InterPro" id="IPR011607">
    <property type="entry name" value="MGS-like_dom"/>
</dbReference>
<dbReference type="InterPro" id="IPR036914">
    <property type="entry name" value="MGS-like_dom_sf"/>
</dbReference>
<dbReference type="NCBIfam" id="TIGR00160">
    <property type="entry name" value="MGSA"/>
    <property type="match status" value="1"/>
</dbReference>
<dbReference type="NCBIfam" id="NF003559">
    <property type="entry name" value="PRK05234.1"/>
    <property type="match status" value="1"/>
</dbReference>
<dbReference type="PANTHER" id="PTHR30492">
    <property type="entry name" value="METHYLGLYOXAL SYNTHASE"/>
    <property type="match status" value="1"/>
</dbReference>
<dbReference type="PANTHER" id="PTHR30492:SF0">
    <property type="entry name" value="METHYLGLYOXAL SYNTHASE"/>
    <property type="match status" value="1"/>
</dbReference>
<dbReference type="Pfam" id="PF02142">
    <property type="entry name" value="MGS"/>
    <property type="match status" value="1"/>
</dbReference>
<dbReference type="PIRSF" id="PIRSF006614">
    <property type="entry name" value="Methylglyox_syn"/>
    <property type="match status" value="1"/>
</dbReference>
<dbReference type="SMART" id="SM00851">
    <property type="entry name" value="MGS"/>
    <property type="match status" value="1"/>
</dbReference>
<dbReference type="SUPFAM" id="SSF52335">
    <property type="entry name" value="Methylglyoxal synthase-like"/>
    <property type="match status" value="1"/>
</dbReference>
<dbReference type="PROSITE" id="PS01335">
    <property type="entry name" value="METHYLGLYOXAL_SYNTH"/>
    <property type="match status" value="1"/>
</dbReference>
<dbReference type="PROSITE" id="PS51855">
    <property type="entry name" value="MGS"/>
    <property type="match status" value="1"/>
</dbReference>
<organism>
    <name type="scientific">Natranaerobius thermophilus (strain ATCC BAA-1301 / DSM 18059 / JW/NM-WN-LF)</name>
    <dbReference type="NCBI Taxonomy" id="457570"/>
    <lineage>
        <taxon>Bacteria</taxon>
        <taxon>Bacillati</taxon>
        <taxon>Bacillota</taxon>
        <taxon>Clostridia</taxon>
        <taxon>Natranaerobiales</taxon>
        <taxon>Natranaerobiaceae</taxon>
        <taxon>Natranaerobius</taxon>
    </lineage>
</organism>
<comment type="function">
    <text evidence="1">Catalyzes the formation of methylglyoxal from dihydroxyacetone phosphate.</text>
</comment>
<comment type="catalytic activity">
    <reaction evidence="1">
        <text>dihydroxyacetone phosphate = methylglyoxal + phosphate</text>
        <dbReference type="Rhea" id="RHEA:17937"/>
        <dbReference type="ChEBI" id="CHEBI:17158"/>
        <dbReference type="ChEBI" id="CHEBI:43474"/>
        <dbReference type="ChEBI" id="CHEBI:57642"/>
        <dbReference type="EC" id="4.2.3.3"/>
    </reaction>
</comment>
<comment type="similarity">
    <text evidence="1">Belongs to the methylglyoxal synthase family.</text>
</comment>
<proteinExistence type="inferred from homology"/>
<reference key="1">
    <citation type="submission" date="2008-04" db="EMBL/GenBank/DDBJ databases">
        <title>Complete sequence of chromosome of Natranaerobius thermophilus JW/NM-WN-LF.</title>
        <authorList>
            <consortium name="US DOE Joint Genome Institute"/>
            <person name="Copeland A."/>
            <person name="Lucas S."/>
            <person name="Lapidus A."/>
            <person name="Glavina del Rio T."/>
            <person name="Dalin E."/>
            <person name="Tice H."/>
            <person name="Bruce D."/>
            <person name="Goodwin L."/>
            <person name="Pitluck S."/>
            <person name="Chertkov O."/>
            <person name="Brettin T."/>
            <person name="Detter J.C."/>
            <person name="Han C."/>
            <person name="Kuske C.R."/>
            <person name="Schmutz J."/>
            <person name="Larimer F."/>
            <person name="Land M."/>
            <person name="Hauser L."/>
            <person name="Kyrpides N."/>
            <person name="Lykidis A."/>
            <person name="Mesbah N.M."/>
            <person name="Wiegel J."/>
        </authorList>
    </citation>
    <scope>NUCLEOTIDE SEQUENCE [LARGE SCALE GENOMIC DNA]</scope>
    <source>
        <strain>ATCC BAA-1301 / DSM 18059 / JW/NM-WN-LF</strain>
    </source>
</reference>
<feature type="chain" id="PRO_1000128999" description="Methylglyoxal synthase">
    <location>
        <begin position="1"/>
        <end position="120"/>
    </location>
</feature>
<feature type="domain" description="MGS-like" evidence="1">
    <location>
        <begin position="1"/>
        <end position="120"/>
    </location>
</feature>
<feature type="active site" description="Proton donor/acceptor" evidence="1">
    <location>
        <position position="60"/>
    </location>
</feature>
<feature type="binding site" evidence="1">
    <location>
        <position position="8"/>
    </location>
    <ligand>
        <name>substrate</name>
    </ligand>
</feature>
<feature type="binding site" evidence="1">
    <location>
        <position position="12"/>
    </location>
    <ligand>
        <name>substrate</name>
    </ligand>
</feature>
<feature type="binding site" evidence="1">
    <location>
        <begin position="54"/>
        <end position="55"/>
    </location>
    <ligand>
        <name>substrate</name>
    </ligand>
</feature>
<feature type="binding site" evidence="1">
    <location>
        <position position="87"/>
    </location>
    <ligand>
        <name>substrate</name>
    </ligand>
</feature>
<gene>
    <name evidence="1" type="primary">mgsA</name>
    <name type="ordered locus">Nther_0707</name>
</gene>
<evidence type="ECO:0000255" key="1">
    <source>
        <dbReference type="HAMAP-Rule" id="MF_00549"/>
    </source>
</evidence>